<dbReference type="EC" id="6.1.1.11" evidence="1"/>
<dbReference type="EMBL" id="AP008981">
    <property type="protein sequence ID" value="BAG39886.1"/>
    <property type="molecule type" value="Genomic_DNA"/>
</dbReference>
<dbReference type="RefSeq" id="WP_012461101.1">
    <property type="nucleotide sequence ID" value="NC_010793.1"/>
</dbReference>
<dbReference type="SMR" id="B3CQX9"/>
<dbReference type="KEGG" id="ott:OTT_0428"/>
<dbReference type="HOGENOM" id="CLU_023797_1_1_5"/>
<dbReference type="OrthoDB" id="9804647at2"/>
<dbReference type="UniPathway" id="UPA00906">
    <property type="reaction ID" value="UER00895"/>
</dbReference>
<dbReference type="Proteomes" id="UP000001033">
    <property type="component" value="Chromosome"/>
</dbReference>
<dbReference type="GO" id="GO:0005737">
    <property type="term" value="C:cytoplasm"/>
    <property type="evidence" value="ECO:0007669"/>
    <property type="project" value="UniProtKB-SubCell"/>
</dbReference>
<dbReference type="GO" id="GO:0005524">
    <property type="term" value="F:ATP binding"/>
    <property type="evidence" value="ECO:0007669"/>
    <property type="project" value="UniProtKB-UniRule"/>
</dbReference>
<dbReference type="GO" id="GO:0004828">
    <property type="term" value="F:serine-tRNA ligase activity"/>
    <property type="evidence" value="ECO:0007669"/>
    <property type="project" value="UniProtKB-UniRule"/>
</dbReference>
<dbReference type="GO" id="GO:0016260">
    <property type="term" value="P:selenocysteine biosynthetic process"/>
    <property type="evidence" value="ECO:0007669"/>
    <property type="project" value="UniProtKB-UniRule"/>
</dbReference>
<dbReference type="GO" id="GO:0006434">
    <property type="term" value="P:seryl-tRNA aminoacylation"/>
    <property type="evidence" value="ECO:0007669"/>
    <property type="project" value="UniProtKB-UniRule"/>
</dbReference>
<dbReference type="CDD" id="cd00770">
    <property type="entry name" value="SerRS_core"/>
    <property type="match status" value="1"/>
</dbReference>
<dbReference type="Gene3D" id="3.30.930.10">
    <property type="entry name" value="Bira Bifunctional Protein, Domain 2"/>
    <property type="match status" value="1"/>
</dbReference>
<dbReference type="Gene3D" id="1.10.287.40">
    <property type="entry name" value="Serine-tRNA synthetase, tRNA binding domain"/>
    <property type="match status" value="1"/>
</dbReference>
<dbReference type="HAMAP" id="MF_00176">
    <property type="entry name" value="Ser_tRNA_synth_type1"/>
    <property type="match status" value="1"/>
</dbReference>
<dbReference type="InterPro" id="IPR002314">
    <property type="entry name" value="aa-tRNA-synt_IIb"/>
</dbReference>
<dbReference type="InterPro" id="IPR006195">
    <property type="entry name" value="aa-tRNA-synth_II"/>
</dbReference>
<dbReference type="InterPro" id="IPR045864">
    <property type="entry name" value="aa-tRNA-synth_II/BPL/LPL"/>
</dbReference>
<dbReference type="InterPro" id="IPR002317">
    <property type="entry name" value="Ser-tRNA-ligase_type_1"/>
</dbReference>
<dbReference type="InterPro" id="IPR015866">
    <property type="entry name" value="Ser-tRNA-synth_1_N"/>
</dbReference>
<dbReference type="InterPro" id="IPR042103">
    <property type="entry name" value="SerRS_1_N_sf"/>
</dbReference>
<dbReference type="InterPro" id="IPR033729">
    <property type="entry name" value="SerRS_core"/>
</dbReference>
<dbReference type="InterPro" id="IPR010978">
    <property type="entry name" value="tRNA-bd_arm"/>
</dbReference>
<dbReference type="NCBIfam" id="TIGR00414">
    <property type="entry name" value="serS"/>
    <property type="match status" value="1"/>
</dbReference>
<dbReference type="PANTHER" id="PTHR43697:SF1">
    <property type="entry name" value="SERINE--TRNA LIGASE"/>
    <property type="match status" value="1"/>
</dbReference>
<dbReference type="PANTHER" id="PTHR43697">
    <property type="entry name" value="SERYL-TRNA SYNTHETASE"/>
    <property type="match status" value="1"/>
</dbReference>
<dbReference type="Pfam" id="PF02403">
    <property type="entry name" value="Seryl_tRNA_N"/>
    <property type="match status" value="1"/>
</dbReference>
<dbReference type="Pfam" id="PF00587">
    <property type="entry name" value="tRNA-synt_2b"/>
    <property type="match status" value="1"/>
</dbReference>
<dbReference type="PIRSF" id="PIRSF001529">
    <property type="entry name" value="Ser-tRNA-synth_IIa"/>
    <property type="match status" value="1"/>
</dbReference>
<dbReference type="PRINTS" id="PR00981">
    <property type="entry name" value="TRNASYNTHSER"/>
</dbReference>
<dbReference type="SUPFAM" id="SSF55681">
    <property type="entry name" value="Class II aaRS and biotin synthetases"/>
    <property type="match status" value="1"/>
</dbReference>
<dbReference type="SUPFAM" id="SSF46589">
    <property type="entry name" value="tRNA-binding arm"/>
    <property type="match status" value="1"/>
</dbReference>
<dbReference type="PROSITE" id="PS50862">
    <property type="entry name" value="AA_TRNA_LIGASE_II"/>
    <property type="match status" value="1"/>
</dbReference>
<keyword id="KW-0030">Aminoacyl-tRNA synthetase</keyword>
<keyword id="KW-0067">ATP-binding</keyword>
<keyword id="KW-0963">Cytoplasm</keyword>
<keyword id="KW-0436">Ligase</keyword>
<keyword id="KW-0547">Nucleotide-binding</keyword>
<keyword id="KW-0648">Protein biosynthesis</keyword>
<gene>
    <name evidence="1" type="primary">serS</name>
    <name type="ordered locus">OTT_0428</name>
</gene>
<comment type="function">
    <text evidence="1">Catalyzes the attachment of serine to tRNA(Ser). Is also able to aminoacylate tRNA(Sec) with serine, to form the misacylated tRNA L-seryl-tRNA(Sec), which will be further converted into selenocysteinyl-tRNA(Sec).</text>
</comment>
<comment type="catalytic activity">
    <reaction evidence="1">
        <text>tRNA(Ser) + L-serine + ATP = L-seryl-tRNA(Ser) + AMP + diphosphate + H(+)</text>
        <dbReference type="Rhea" id="RHEA:12292"/>
        <dbReference type="Rhea" id="RHEA-COMP:9669"/>
        <dbReference type="Rhea" id="RHEA-COMP:9703"/>
        <dbReference type="ChEBI" id="CHEBI:15378"/>
        <dbReference type="ChEBI" id="CHEBI:30616"/>
        <dbReference type="ChEBI" id="CHEBI:33019"/>
        <dbReference type="ChEBI" id="CHEBI:33384"/>
        <dbReference type="ChEBI" id="CHEBI:78442"/>
        <dbReference type="ChEBI" id="CHEBI:78533"/>
        <dbReference type="ChEBI" id="CHEBI:456215"/>
        <dbReference type="EC" id="6.1.1.11"/>
    </reaction>
</comment>
<comment type="catalytic activity">
    <reaction evidence="1">
        <text>tRNA(Sec) + L-serine + ATP = L-seryl-tRNA(Sec) + AMP + diphosphate + H(+)</text>
        <dbReference type="Rhea" id="RHEA:42580"/>
        <dbReference type="Rhea" id="RHEA-COMP:9742"/>
        <dbReference type="Rhea" id="RHEA-COMP:10128"/>
        <dbReference type="ChEBI" id="CHEBI:15378"/>
        <dbReference type="ChEBI" id="CHEBI:30616"/>
        <dbReference type="ChEBI" id="CHEBI:33019"/>
        <dbReference type="ChEBI" id="CHEBI:33384"/>
        <dbReference type="ChEBI" id="CHEBI:78442"/>
        <dbReference type="ChEBI" id="CHEBI:78533"/>
        <dbReference type="ChEBI" id="CHEBI:456215"/>
        <dbReference type="EC" id="6.1.1.11"/>
    </reaction>
</comment>
<comment type="pathway">
    <text evidence="1">Aminoacyl-tRNA biosynthesis; selenocysteinyl-tRNA(Sec) biosynthesis; L-seryl-tRNA(Sec) from L-serine and tRNA(Sec): step 1/1.</text>
</comment>
<comment type="subunit">
    <text evidence="1">Homodimer. The tRNA molecule binds across the dimer.</text>
</comment>
<comment type="subcellular location">
    <subcellularLocation>
        <location evidence="1">Cytoplasm</location>
    </subcellularLocation>
</comment>
<comment type="domain">
    <text evidence="1">Consists of two distinct domains, a catalytic core and a N-terminal extension that is involved in tRNA binding.</text>
</comment>
<comment type="similarity">
    <text evidence="1">Belongs to the class-II aminoacyl-tRNA synthetase family. Type-1 seryl-tRNA synthetase subfamily.</text>
</comment>
<proteinExistence type="inferred from homology"/>
<protein>
    <recommendedName>
        <fullName evidence="1">Serine--tRNA ligase</fullName>
        <ecNumber evidence="1">6.1.1.11</ecNumber>
    </recommendedName>
    <alternativeName>
        <fullName evidence="1">Seryl-tRNA synthetase</fullName>
        <shortName evidence="1">SerRS</shortName>
    </alternativeName>
    <alternativeName>
        <fullName evidence="1">Seryl-tRNA(Ser/Sec) synthetase</fullName>
    </alternativeName>
</protein>
<sequence>MLDIKWIRANPDKLDESLSKRGIDSVSKSIIHIDSEKRTLISLIQKLQHERKEKSSSVAHIYDKSSTDFEEIQNDVKLINQKITELETSLLHHEKRLSEIMDNLPNLVADDVPYGTNSDMNKVLKECGTIQNIKFPKHHYEIGKNLGMMDFNTATKMSGSRFVILKHDLAKLERALINFMIDVHTTEFNFFEVSPPCLVKDHAMYNVGQLPKFADASFETTTGYRLIPTAEVPLTNIFANTTLLEEKLPIRLVAFTPCFRSEVGSAGKDVKGMLRMHQFGKVELFTIATPKESNREFEYLTAAAEKILEKLGLPYRVVLLCSGDIGFAAHKTYDLEVWLPAQNCYREISSCSHFSSFQARRSLSKYRELCSKKVNFLHTINGSGLAVGRTIIAILENYQNSDGSVTIPEKLRNYMGGQKLITPLTETVF</sequence>
<feature type="chain" id="PRO_1000098104" description="Serine--tRNA ligase">
    <location>
        <begin position="1"/>
        <end position="429"/>
    </location>
</feature>
<feature type="binding site" evidence="1">
    <location>
        <begin position="229"/>
        <end position="231"/>
    </location>
    <ligand>
        <name>L-serine</name>
        <dbReference type="ChEBI" id="CHEBI:33384"/>
    </ligand>
</feature>
<feature type="binding site" evidence="1">
    <location>
        <begin position="260"/>
        <end position="262"/>
    </location>
    <ligand>
        <name>ATP</name>
        <dbReference type="ChEBI" id="CHEBI:30616"/>
    </ligand>
</feature>
<feature type="binding site" evidence="1">
    <location>
        <position position="283"/>
    </location>
    <ligand>
        <name>L-serine</name>
        <dbReference type="ChEBI" id="CHEBI:33384"/>
    </ligand>
</feature>
<feature type="binding site" evidence="1">
    <location>
        <begin position="347"/>
        <end position="350"/>
    </location>
    <ligand>
        <name>ATP</name>
        <dbReference type="ChEBI" id="CHEBI:30616"/>
    </ligand>
</feature>
<feature type="binding site" evidence="1">
    <location>
        <position position="383"/>
    </location>
    <ligand>
        <name>L-serine</name>
        <dbReference type="ChEBI" id="CHEBI:33384"/>
    </ligand>
</feature>
<organism>
    <name type="scientific">Orientia tsutsugamushi (strain Ikeda)</name>
    <name type="common">Rickettsia tsutsugamushi</name>
    <dbReference type="NCBI Taxonomy" id="334380"/>
    <lineage>
        <taxon>Bacteria</taxon>
        <taxon>Pseudomonadati</taxon>
        <taxon>Pseudomonadota</taxon>
        <taxon>Alphaproteobacteria</taxon>
        <taxon>Rickettsiales</taxon>
        <taxon>Rickettsiaceae</taxon>
        <taxon>Rickettsieae</taxon>
        <taxon>Orientia</taxon>
    </lineage>
</organism>
<accession>B3CQX9</accession>
<reference key="1">
    <citation type="journal article" date="2008" name="DNA Res.">
        <title>The whole-genome sequencing of the obligate intracellular bacterium Orientia tsutsugamushi revealed massive gene amplification during reductive genome evolution.</title>
        <authorList>
            <person name="Nakayama K."/>
            <person name="Yamashita A."/>
            <person name="Kurokawa K."/>
            <person name="Morimoto T."/>
            <person name="Ogawa M."/>
            <person name="Fukuhara M."/>
            <person name="Urakami H."/>
            <person name="Ohnishi M."/>
            <person name="Uchiyama I."/>
            <person name="Ogura Y."/>
            <person name="Ooka T."/>
            <person name="Oshima K."/>
            <person name="Tamura A."/>
            <person name="Hattori M."/>
            <person name="Hayashi T."/>
        </authorList>
    </citation>
    <scope>NUCLEOTIDE SEQUENCE [LARGE SCALE GENOMIC DNA]</scope>
    <source>
        <strain>Ikeda</strain>
    </source>
</reference>
<evidence type="ECO:0000255" key="1">
    <source>
        <dbReference type="HAMAP-Rule" id="MF_00176"/>
    </source>
</evidence>
<name>SYS_ORITI</name>